<evidence type="ECO:0000250" key="1">
    <source>
        <dbReference type="UniProtKB" id="P02086"/>
    </source>
</evidence>
<evidence type="ECO:0000250" key="2">
    <source>
        <dbReference type="UniProtKB" id="P68871"/>
    </source>
</evidence>
<evidence type="ECO:0000255" key="3">
    <source>
        <dbReference type="PROSITE-ProRule" id="PRU00238"/>
    </source>
</evidence>
<evidence type="ECO:0007829" key="4">
    <source>
        <dbReference type="PDB" id="1FHJ"/>
    </source>
</evidence>
<dbReference type="PDB" id="1FHJ">
    <property type="method" value="X-ray"/>
    <property type="resolution" value="1.80 A"/>
    <property type="chains" value="B/D=1-146"/>
</dbReference>
<dbReference type="PDB" id="2B7H">
    <property type="method" value="X-ray"/>
    <property type="resolution" value="2.20 A"/>
    <property type="chains" value="B/D=1-146"/>
</dbReference>
<dbReference type="PDBsum" id="1FHJ"/>
<dbReference type="PDBsum" id="2B7H"/>
<dbReference type="SMR" id="P60526"/>
<dbReference type="EvolutionaryTrace" id="P60526"/>
<dbReference type="GO" id="GO:0072562">
    <property type="term" value="C:blood microparticle"/>
    <property type="evidence" value="ECO:0007669"/>
    <property type="project" value="TreeGrafter"/>
</dbReference>
<dbReference type="GO" id="GO:0031838">
    <property type="term" value="C:haptoglobin-hemoglobin complex"/>
    <property type="evidence" value="ECO:0007669"/>
    <property type="project" value="TreeGrafter"/>
</dbReference>
<dbReference type="GO" id="GO:0005833">
    <property type="term" value="C:hemoglobin complex"/>
    <property type="evidence" value="ECO:0007669"/>
    <property type="project" value="InterPro"/>
</dbReference>
<dbReference type="GO" id="GO:0031720">
    <property type="term" value="F:haptoglobin binding"/>
    <property type="evidence" value="ECO:0007669"/>
    <property type="project" value="TreeGrafter"/>
</dbReference>
<dbReference type="GO" id="GO:0020037">
    <property type="term" value="F:heme binding"/>
    <property type="evidence" value="ECO:0007669"/>
    <property type="project" value="InterPro"/>
</dbReference>
<dbReference type="GO" id="GO:0031721">
    <property type="term" value="F:hemoglobin alpha binding"/>
    <property type="evidence" value="ECO:0007669"/>
    <property type="project" value="TreeGrafter"/>
</dbReference>
<dbReference type="GO" id="GO:0046872">
    <property type="term" value="F:metal ion binding"/>
    <property type="evidence" value="ECO:0007669"/>
    <property type="project" value="UniProtKB-KW"/>
</dbReference>
<dbReference type="GO" id="GO:0043177">
    <property type="term" value="F:organic acid binding"/>
    <property type="evidence" value="ECO:0007669"/>
    <property type="project" value="TreeGrafter"/>
</dbReference>
<dbReference type="GO" id="GO:0019825">
    <property type="term" value="F:oxygen binding"/>
    <property type="evidence" value="ECO:0007669"/>
    <property type="project" value="InterPro"/>
</dbReference>
<dbReference type="GO" id="GO:0005344">
    <property type="term" value="F:oxygen carrier activity"/>
    <property type="evidence" value="ECO:0007669"/>
    <property type="project" value="UniProtKB-KW"/>
</dbReference>
<dbReference type="GO" id="GO:0004601">
    <property type="term" value="F:peroxidase activity"/>
    <property type="evidence" value="ECO:0007669"/>
    <property type="project" value="TreeGrafter"/>
</dbReference>
<dbReference type="GO" id="GO:0042744">
    <property type="term" value="P:hydrogen peroxide catabolic process"/>
    <property type="evidence" value="ECO:0007669"/>
    <property type="project" value="TreeGrafter"/>
</dbReference>
<dbReference type="CDD" id="cd08925">
    <property type="entry name" value="Hb-beta-like"/>
    <property type="match status" value="1"/>
</dbReference>
<dbReference type="FunFam" id="1.10.490.10:FF:000001">
    <property type="entry name" value="Hemoglobin subunit beta"/>
    <property type="match status" value="1"/>
</dbReference>
<dbReference type="Gene3D" id="1.10.490.10">
    <property type="entry name" value="Globins"/>
    <property type="match status" value="1"/>
</dbReference>
<dbReference type="InterPro" id="IPR000971">
    <property type="entry name" value="Globin"/>
</dbReference>
<dbReference type="InterPro" id="IPR009050">
    <property type="entry name" value="Globin-like_sf"/>
</dbReference>
<dbReference type="InterPro" id="IPR012292">
    <property type="entry name" value="Globin/Proto"/>
</dbReference>
<dbReference type="InterPro" id="IPR002337">
    <property type="entry name" value="Hemoglobin_b"/>
</dbReference>
<dbReference type="InterPro" id="IPR050056">
    <property type="entry name" value="Hemoglobin_oxygen_transport"/>
</dbReference>
<dbReference type="PANTHER" id="PTHR11442">
    <property type="entry name" value="HEMOGLOBIN FAMILY MEMBER"/>
    <property type="match status" value="1"/>
</dbReference>
<dbReference type="PANTHER" id="PTHR11442:SF42">
    <property type="entry name" value="HEMOGLOBIN SUBUNIT BETA"/>
    <property type="match status" value="1"/>
</dbReference>
<dbReference type="Pfam" id="PF00042">
    <property type="entry name" value="Globin"/>
    <property type="match status" value="1"/>
</dbReference>
<dbReference type="PRINTS" id="PR00814">
    <property type="entry name" value="BETAHAEM"/>
</dbReference>
<dbReference type="SUPFAM" id="SSF46458">
    <property type="entry name" value="Globin-like"/>
    <property type="match status" value="1"/>
</dbReference>
<dbReference type="PROSITE" id="PS01033">
    <property type="entry name" value="GLOBIN"/>
    <property type="match status" value="1"/>
</dbReference>
<organism>
    <name type="scientific">Chrysocyon brachyurus</name>
    <name type="common">Maned wolf</name>
    <dbReference type="NCBI Taxonomy" id="68728"/>
    <lineage>
        <taxon>Eukaryota</taxon>
        <taxon>Metazoa</taxon>
        <taxon>Chordata</taxon>
        <taxon>Craniata</taxon>
        <taxon>Vertebrata</taxon>
        <taxon>Euteleostomi</taxon>
        <taxon>Mammalia</taxon>
        <taxon>Eutheria</taxon>
        <taxon>Laurasiatheria</taxon>
        <taxon>Carnivora</taxon>
        <taxon>Caniformia</taxon>
        <taxon>Canidae</taxon>
        <taxon>Chrysocyon</taxon>
    </lineage>
</organism>
<accession>P60526</accession>
<keyword id="KW-0002">3D-structure</keyword>
<keyword id="KW-0007">Acetylation</keyword>
<keyword id="KW-0349">Heme</keyword>
<keyword id="KW-0408">Iron</keyword>
<keyword id="KW-0479">Metal-binding</keyword>
<keyword id="KW-0561">Oxygen transport</keyword>
<keyword id="KW-0597">Phosphoprotein</keyword>
<keyword id="KW-0702">S-nitrosylation</keyword>
<keyword id="KW-0813">Transport</keyword>
<name>HBB_CHRBR</name>
<reference key="1">
    <citation type="journal article" date="2003" name="Protein Pept. Lett.">
        <title>Crystal structure of hemoglobin from the maned wolf (Chrysocyon brachyurus) using synchrotron radiation.</title>
        <authorList>
            <person name="Fadel V."/>
            <person name="Canduri F."/>
            <person name="Olivieri J.R."/>
            <person name="Smarra A.L."/>
            <person name="Colombo M.F."/>
            <person name="Bonilla-Rodriguez G.O."/>
            <person name="de Azevedo W.F. Jr."/>
        </authorList>
    </citation>
    <scope>X-RAY CRYSTALLOGRAPHY (1.8 ANGSTROMS)</scope>
</reference>
<proteinExistence type="evidence at protein level"/>
<gene>
    <name type="primary">HBB</name>
</gene>
<feature type="chain" id="PRO_0000052927" description="Hemoglobin subunit beta">
    <location>
        <begin position="1"/>
        <end position="146"/>
    </location>
</feature>
<feature type="domain" description="Globin" evidence="3">
    <location>
        <begin position="2"/>
        <end position="146"/>
    </location>
</feature>
<feature type="binding site" description="distal binding residue">
    <location>
        <position position="63"/>
    </location>
    <ligand>
        <name>heme b</name>
        <dbReference type="ChEBI" id="CHEBI:60344"/>
    </ligand>
    <ligandPart>
        <name>Fe</name>
        <dbReference type="ChEBI" id="CHEBI:18248"/>
    </ligandPart>
</feature>
<feature type="binding site" description="proximal binding residue">
    <location>
        <position position="92"/>
    </location>
    <ligand>
        <name>heme b</name>
        <dbReference type="ChEBI" id="CHEBI:60344"/>
    </ligand>
    <ligandPart>
        <name>Fe</name>
        <dbReference type="ChEBI" id="CHEBI:18248"/>
    </ligandPart>
</feature>
<feature type="modified residue" description="N-acetylvaline" evidence="1">
    <location>
        <position position="1"/>
    </location>
</feature>
<feature type="modified residue" description="Phosphoserine" evidence="2">
    <location>
        <position position="44"/>
    </location>
</feature>
<feature type="modified residue" description="N6-acetyllysine" evidence="2">
    <location>
        <position position="59"/>
    </location>
</feature>
<feature type="modified residue" description="N6-acetyllysine" evidence="2">
    <location>
        <position position="82"/>
    </location>
</feature>
<feature type="modified residue" description="S-nitrosocysteine" evidence="2">
    <location>
        <position position="93"/>
    </location>
</feature>
<feature type="modified residue" description="N6-acetyllysine" evidence="2">
    <location>
        <position position="144"/>
    </location>
</feature>
<feature type="helix" evidence="4">
    <location>
        <begin position="5"/>
        <end position="15"/>
    </location>
</feature>
<feature type="helix" evidence="4">
    <location>
        <begin position="20"/>
        <end position="34"/>
    </location>
</feature>
<feature type="helix" evidence="4">
    <location>
        <begin position="36"/>
        <end position="45"/>
    </location>
</feature>
<feature type="helix" evidence="4">
    <location>
        <begin position="51"/>
        <end position="56"/>
    </location>
</feature>
<feature type="helix" evidence="4">
    <location>
        <begin position="58"/>
        <end position="76"/>
    </location>
</feature>
<feature type="helix" evidence="4">
    <location>
        <begin position="78"/>
        <end position="80"/>
    </location>
</feature>
<feature type="helix" evidence="4">
    <location>
        <begin position="81"/>
        <end position="84"/>
    </location>
</feature>
<feature type="helix" evidence="4">
    <location>
        <begin position="86"/>
        <end position="94"/>
    </location>
</feature>
<feature type="helix" evidence="4">
    <location>
        <begin position="101"/>
        <end position="118"/>
    </location>
</feature>
<feature type="helix" evidence="4">
    <location>
        <begin position="119"/>
        <end position="121"/>
    </location>
</feature>
<feature type="helix" evidence="4">
    <location>
        <begin position="124"/>
        <end position="141"/>
    </location>
</feature>
<feature type="helix" evidence="4">
    <location>
        <begin position="143"/>
        <end position="145"/>
    </location>
</feature>
<protein>
    <recommendedName>
        <fullName>Hemoglobin subunit beta</fullName>
    </recommendedName>
    <alternativeName>
        <fullName>Beta-globin</fullName>
    </alternativeName>
    <alternativeName>
        <fullName>Hemoglobin beta chain</fullName>
    </alternativeName>
</protein>
<sequence length="146" mass="15996">VHLTAEEKSLVSGLWGKVNVDEVGGEALGRLLIVYPWTQRFFDSFGDLSTPDAVMSNAKVKAHGKKVLNSFSDGLKNLDNLKGTFAKLSELHCDKLHVDPENFKLLGNVLVCVLAHHFGKEFTPQVQAAYQKVVAGVANALAHKYH</sequence>
<comment type="function">
    <text>Involved in oxygen transport from the lung to the various peripheral tissues.</text>
</comment>
<comment type="subunit">
    <text>Heterotetramer of two alpha chains and two beta chains.</text>
</comment>
<comment type="tissue specificity">
    <text>Red blood cells.</text>
</comment>
<comment type="similarity">
    <text evidence="3">Belongs to the globin family.</text>
</comment>